<evidence type="ECO:0000255" key="1">
    <source>
        <dbReference type="HAMAP-Rule" id="MF_00365"/>
    </source>
</evidence>
<name>RECF_ALIFM</name>
<gene>
    <name evidence="1" type="primary">recF</name>
    <name type="ordered locus">VFMJ11_0011</name>
</gene>
<reference key="1">
    <citation type="submission" date="2008-08" db="EMBL/GenBank/DDBJ databases">
        <title>Complete sequence of Vibrio fischeri strain MJ11.</title>
        <authorList>
            <person name="Mandel M.J."/>
            <person name="Stabb E.V."/>
            <person name="Ruby E.G."/>
            <person name="Ferriera S."/>
            <person name="Johnson J."/>
            <person name="Kravitz S."/>
            <person name="Beeson K."/>
            <person name="Sutton G."/>
            <person name="Rogers Y.-H."/>
            <person name="Friedman R."/>
            <person name="Frazier M."/>
            <person name="Venter J.C."/>
        </authorList>
    </citation>
    <scope>NUCLEOTIDE SEQUENCE [LARGE SCALE GENOMIC DNA]</scope>
    <source>
        <strain>MJ11</strain>
    </source>
</reference>
<organism>
    <name type="scientific">Aliivibrio fischeri (strain MJ11)</name>
    <name type="common">Vibrio fischeri</name>
    <dbReference type="NCBI Taxonomy" id="388396"/>
    <lineage>
        <taxon>Bacteria</taxon>
        <taxon>Pseudomonadati</taxon>
        <taxon>Pseudomonadota</taxon>
        <taxon>Gammaproteobacteria</taxon>
        <taxon>Vibrionales</taxon>
        <taxon>Vibrionaceae</taxon>
        <taxon>Aliivibrio</taxon>
    </lineage>
</organism>
<protein>
    <recommendedName>
        <fullName evidence="1">DNA replication and repair protein RecF</fullName>
    </recommendedName>
</protein>
<dbReference type="EMBL" id="CP001139">
    <property type="protein sequence ID" value="ACH64942.1"/>
    <property type="molecule type" value="Genomic_DNA"/>
</dbReference>
<dbReference type="RefSeq" id="WP_012532720.1">
    <property type="nucleotide sequence ID" value="NC_011184.1"/>
</dbReference>
<dbReference type="SMR" id="B5FEV5"/>
<dbReference type="KEGG" id="vfm:VFMJ11_0011"/>
<dbReference type="HOGENOM" id="CLU_040267_0_0_6"/>
<dbReference type="Proteomes" id="UP000001857">
    <property type="component" value="Chromosome I"/>
</dbReference>
<dbReference type="GO" id="GO:0005737">
    <property type="term" value="C:cytoplasm"/>
    <property type="evidence" value="ECO:0007669"/>
    <property type="project" value="UniProtKB-SubCell"/>
</dbReference>
<dbReference type="GO" id="GO:0005524">
    <property type="term" value="F:ATP binding"/>
    <property type="evidence" value="ECO:0007669"/>
    <property type="project" value="UniProtKB-UniRule"/>
</dbReference>
<dbReference type="GO" id="GO:0003697">
    <property type="term" value="F:single-stranded DNA binding"/>
    <property type="evidence" value="ECO:0007669"/>
    <property type="project" value="UniProtKB-UniRule"/>
</dbReference>
<dbReference type="GO" id="GO:0006260">
    <property type="term" value="P:DNA replication"/>
    <property type="evidence" value="ECO:0007669"/>
    <property type="project" value="UniProtKB-UniRule"/>
</dbReference>
<dbReference type="GO" id="GO:0000731">
    <property type="term" value="P:DNA synthesis involved in DNA repair"/>
    <property type="evidence" value="ECO:0007669"/>
    <property type="project" value="TreeGrafter"/>
</dbReference>
<dbReference type="GO" id="GO:0006302">
    <property type="term" value="P:double-strand break repair"/>
    <property type="evidence" value="ECO:0007669"/>
    <property type="project" value="TreeGrafter"/>
</dbReference>
<dbReference type="GO" id="GO:0009432">
    <property type="term" value="P:SOS response"/>
    <property type="evidence" value="ECO:0007669"/>
    <property type="project" value="UniProtKB-UniRule"/>
</dbReference>
<dbReference type="FunFam" id="1.20.1050.90:FF:000001">
    <property type="entry name" value="DNA replication and repair protein RecF"/>
    <property type="match status" value="1"/>
</dbReference>
<dbReference type="Gene3D" id="3.40.50.300">
    <property type="entry name" value="P-loop containing nucleotide triphosphate hydrolases"/>
    <property type="match status" value="1"/>
</dbReference>
<dbReference type="Gene3D" id="1.20.1050.90">
    <property type="entry name" value="RecF/RecN/SMC, N-terminal domain"/>
    <property type="match status" value="1"/>
</dbReference>
<dbReference type="HAMAP" id="MF_00365">
    <property type="entry name" value="RecF"/>
    <property type="match status" value="1"/>
</dbReference>
<dbReference type="InterPro" id="IPR001238">
    <property type="entry name" value="DNA-binding_RecF"/>
</dbReference>
<dbReference type="InterPro" id="IPR018078">
    <property type="entry name" value="DNA-binding_RecF_CS"/>
</dbReference>
<dbReference type="InterPro" id="IPR027417">
    <property type="entry name" value="P-loop_NTPase"/>
</dbReference>
<dbReference type="InterPro" id="IPR003395">
    <property type="entry name" value="RecF/RecN/SMC_N"/>
</dbReference>
<dbReference type="InterPro" id="IPR042174">
    <property type="entry name" value="RecF_2"/>
</dbReference>
<dbReference type="NCBIfam" id="TIGR00611">
    <property type="entry name" value="recf"/>
    <property type="match status" value="1"/>
</dbReference>
<dbReference type="PANTHER" id="PTHR32182">
    <property type="entry name" value="DNA REPLICATION AND REPAIR PROTEIN RECF"/>
    <property type="match status" value="1"/>
</dbReference>
<dbReference type="PANTHER" id="PTHR32182:SF0">
    <property type="entry name" value="DNA REPLICATION AND REPAIR PROTEIN RECF"/>
    <property type="match status" value="1"/>
</dbReference>
<dbReference type="Pfam" id="PF02463">
    <property type="entry name" value="SMC_N"/>
    <property type="match status" value="1"/>
</dbReference>
<dbReference type="SUPFAM" id="SSF52540">
    <property type="entry name" value="P-loop containing nucleoside triphosphate hydrolases"/>
    <property type="match status" value="1"/>
</dbReference>
<dbReference type="PROSITE" id="PS00617">
    <property type="entry name" value="RECF_1"/>
    <property type="match status" value="1"/>
</dbReference>
<dbReference type="PROSITE" id="PS00618">
    <property type="entry name" value="RECF_2"/>
    <property type="match status" value="1"/>
</dbReference>
<keyword id="KW-0067">ATP-binding</keyword>
<keyword id="KW-0963">Cytoplasm</keyword>
<keyword id="KW-0227">DNA damage</keyword>
<keyword id="KW-0234">DNA repair</keyword>
<keyword id="KW-0235">DNA replication</keyword>
<keyword id="KW-0238">DNA-binding</keyword>
<keyword id="KW-0547">Nucleotide-binding</keyword>
<keyword id="KW-0742">SOS response</keyword>
<proteinExistence type="inferred from homology"/>
<accession>B5FEV5</accession>
<sequence length="359" mass="40885">MPLSRLIINDFRNITTCDIQLSPGFNFVIGPNGSGKTSVLEAIYLLGHGRSFKSSLTGRIIRNDCDELFIHGRFTTPELFELPIGINKQRDGTTEVKIGGESGQKLAQLAKVLPLQLIHPEGFELVTDGPKFRRAFIDWGVFHVEPAFYDAWSRVKRLTKQRNALLKTANSYRELSYWDLELAQLSEKIDQWRVDYINHISEATQQICQAFLPEYDIKLSYYRGWDRETPYAELLKKNFERDKQLGYTVGGPNKADLRIKVAGTPVEDVLSRGQLKLMVCALRLAQGQHLTEATGKQCIYLIDDFASELDSHRRQLLAQYLKQTKAQVFISSITAEQIADMHDDESKMFEIEHGKIAQG</sequence>
<feature type="chain" id="PRO_1000121168" description="DNA replication and repair protein RecF">
    <location>
        <begin position="1"/>
        <end position="359"/>
    </location>
</feature>
<feature type="binding site" evidence="1">
    <location>
        <begin position="30"/>
        <end position="37"/>
    </location>
    <ligand>
        <name>ATP</name>
        <dbReference type="ChEBI" id="CHEBI:30616"/>
    </ligand>
</feature>
<comment type="function">
    <text evidence="1">The RecF protein is involved in DNA metabolism; it is required for DNA replication and normal SOS inducibility. RecF binds preferentially to single-stranded, linear DNA. It also seems to bind ATP.</text>
</comment>
<comment type="subcellular location">
    <subcellularLocation>
        <location evidence="1">Cytoplasm</location>
    </subcellularLocation>
</comment>
<comment type="similarity">
    <text evidence="1">Belongs to the RecF family.</text>
</comment>